<organism>
    <name type="scientific">Pongo abelii</name>
    <name type="common">Sumatran orangutan</name>
    <name type="synonym">Pongo pygmaeus abelii</name>
    <dbReference type="NCBI Taxonomy" id="9601"/>
    <lineage>
        <taxon>Eukaryota</taxon>
        <taxon>Metazoa</taxon>
        <taxon>Chordata</taxon>
        <taxon>Craniata</taxon>
        <taxon>Vertebrata</taxon>
        <taxon>Euteleostomi</taxon>
        <taxon>Mammalia</taxon>
        <taxon>Eutheria</taxon>
        <taxon>Euarchontoglires</taxon>
        <taxon>Primates</taxon>
        <taxon>Haplorrhini</taxon>
        <taxon>Catarrhini</taxon>
        <taxon>Hominidae</taxon>
        <taxon>Pongo</taxon>
    </lineage>
</organism>
<comment type="function">
    <text evidence="1">Part of the small subunit (SSU) processome, first precursor of the small eukaryotic ribosomal subunit. During the assembly of the SSU processome in the nucleolus, many ribosome biogenesis factors, an RNA chaperone and ribosomal proteins associate with the nascent pre-rRNA and work in concert to generate RNA folding, modifications, rearrangements and cleavage as well as targeted degradation of pre-ribosomal RNA by the RNA exosome.</text>
</comment>
<comment type="subunit">
    <text evidence="1">Part of the small subunit (SSU) processome, composed of more than 70 proteins and the RNA chaperone small nucleolar RNA (snoRNA) U3.</text>
</comment>
<comment type="subcellular location">
    <subcellularLocation>
        <location evidence="1">Nucleus</location>
        <location evidence="1">Nucleolus</location>
    </subcellularLocation>
</comment>
<comment type="similarity">
    <text evidence="4">Belongs to the WD repeat PWP2 family.</text>
</comment>
<sequence>MKFAYRFSNLLGTVYRRGNLNFTCDGNSVISPVGNRVTVFDLKNNKSDTLPLATRYNVKCVGLSPDGRLAIIVDEGGDALLVSLVCRSVLHHFHFKGSVHSVSFSPDGRKFVVTKGNIAQMYHAPGKKREFNAFVLDKTYFGPYDETTCIDWTDDSRCFVVGSKDMSTWVFGAERWDNLIYYALGGHKDAIVACFFESNSLDLYSLSQDGVLCMWQCDTPPEGLRLKPPAGWKADLLQREQEEEEEEGDRETTIRGKATPAEEEKTGKVKYSRLAKYFFNKEGDFNNLTAAAFHKKSHLLVTGFASGIFHLHELPEFNLIHSLSISDQSIASVAINSSGDWIAFGCSGLGQLLVWEWQSESYVLKQQGHFNSMVALAYSPDGQYIVTGGDDGKVKVWNTLSGFCFVTFTEHSSGVTGVTFTATGYVVVTSSMDGTVRAFDLHRYRNFRTFTSPRPTQFSCVAVDASGEIVSAGAQDSFEIFVWSMQTGRLLDVLSGHEGPISGLCFNPMKSILASASWDKTERLWDMFDSWRTKETLALTSDALAVTFRPDGAELAVATLNSQITFWDPENAVQTGSIEGRHHLKTGRKELDKITAKHAAKGKAFTTLCYSADGQSILAGGMSKFVCIYHVREQILMKRFEISCNLSLDAMEEFLNRRKMTEFGNLALIDQDAGQEDGVAIPLPGVRKGDMSSRHFKPEIRVTSLRFSPTGRCWAATTTEGLLIFSLDTRVLFDPFELDTSITPGRVREALRQQDFTRAILMALRLNESKLVQEALEAVPSGEIEVVTSSLPELYVEKVLEFLASSFEVSRHLEFYLLWTHRLLMLHGQKLKSRAGTLLPVIQFLQKSIQRHLDDLSKLCSWNRYNMQYALAVSKQRGTKRSLDPLGSEEEAEASEDDSLHLLGGGGRDSEEGMLAES</sequence>
<evidence type="ECO:0000250" key="1">
    <source>
        <dbReference type="UniProtKB" id="Q15269"/>
    </source>
</evidence>
<evidence type="ECO:0000250" key="2">
    <source>
        <dbReference type="UniProtKB" id="Q8BU03"/>
    </source>
</evidence>
<evidence type="ECO:0000256" key="3">
    <source>
        <dbReference type="SAM" id="MobiDB-lite"/>
    </source>
</evidence>
<evidence type="ECO:0000305" key="4"/>
<reference key="1">
    <citation type="submission" date="2004-11" db="EMBL/GenBank/DDBJ databases">
        <authorList>
            <consortium name="The German cDNA consortium"/>
        </authorList>
    </citation>
    <scope>NUCLEOTIDE SEQUENCE [LARGE SCALE MRNA]</scope>
    <source>
        <tissue>Kidney</tissue>
    </source>
</reference>
<accession>Q5RFQ3</accession>
<gene>
    <name type="primary">PWP2</name>
</gene>
<keyword id="KW-0539">Nucleus</keyword>
<keyword id="KW-0597">Phosphoprotein</keyword>
<keyword id="KW-1185">Reference proteome</keyword>
<keyword id="KW-0677">Repeat</keyword>
<keyword id="KW-0853">WD repeat</keyword>
<proteinExistence type="evidence at transcript level"/>
<name>PWP2_PONAB</name>
<dbReference type="EMBL" id="CR857099">
    <property type="protein sequence ID" value="CAH89404.1"/>
    <property type="molecule type" value="mRNA"/>
</dbReference>
<dbReference type="RefSeq" id="NP_001129000.1">
    <property type="nucleotide sequence ID" value="NM_001135528.2"/>
</dbReference>
<dbReference type="SMR" id="Q5RFQ3"/>
<dbReference type="FunCoup" id="Q5RFQ3">
    <property type="interactions" value="1141"/>
</dbReference>
<dbReference type="STRING" id="9601.ENSPPYP00000012815"/>
<dbReference type="GeneID" id="100190840"/>
<dbReference type="KEGG" id="pon:100190840"/>
<dbReference type="CTD" id="5822"/>
<dbReference type="eggNOG" id="KOG0291">
    <property type="taxonomic scope" value="Eukaryota"/>
</dbReference>
<dbReference type="InParanoid" id="Q5RFQ3"/>
<dbReference type="OrthoDB" id="3142434at2759"/>
<dbReference type="Proteomes" id="UP000001595">
    <property type="component" value="Unplaced"/>
</dbReference>
<dbReference type="GO" id="GO:0034388">
    <property type="term" value="C:Pwp2p-containing subcomplex of 90S preribosome"/>
    <property type="evidence" value="ECO:0007669"/>
    <property type="project" value="TreeGrafter"/>
</dbReference>
<dbReference type="GO" id="GO:0032040">
    <property type="term" value="C:small-subunit processome"/>
    <property type="evidence" value="ECO:0000250"/>
    <property type="project" value="UniProtKB"/>
</dbReference>
<dbReference type="GO" id="GO:0000462">
    <property type="term" value="P:maturation of SSU-rRNA from tricistronic rRNA transcript (SSU-rRNA, 5.8S rRNA, LSU-rRNA)"/>
    <property type="evidence" value="ECO:0007669"/>
    <property type="project" value="TreeGrafter"/>
</dbReference>
<dbReference type="GO" id="GO:0000028">
    <property type="term" value="P:ribosomal small subunit assembly"/>
    <property type="evidence" value="ECO:0007669"/>
    <property type="project" value="TreeGrafter"/>
</dbReference>
<dbReference type="GO" id="GO:0042274">
    <property type="term" value="P:ribosomal small subunit biogenesis"/>
    <property type="evidence" value="ECO:0000250"/>
    <property type="project" value="UniProtKB"/>
</dbReference>
<dbReference type="CDD" id="cd00200">
    <property type="entry name" value="WD40"/>
    <property type="match status" value="1"/>
</dbReference>
<dbReference type="FunFam" id="2.130.10.10:FF:000216">
    <property type="entry name" value="Periodic tryptophan protein 2 homolog"/>
    <property type="match status" value="1"/>
</dbReference>
<dbReference type="FunFam" id="2.130.10.10:FF:000255">
    <property type="entry name" value="Periodic tryptophan protein 2 homolog"/>
    <property type="match status" value="1"/>
</dbReference>
<dbReference type="FunFam" id="2.130.10.10:FF:000265">
    <property type="entry name" value="periodic tryptophan protein 2 homolog"/>
    <property type="match status" value="1"/>
</dbReference>
<dbReference type="Gene3D" id="2.130.10.10">
    <property type="entry name" value="YVTN repeat-like/Quinoprotein amine dehydrogenase"/>
    <property type="match status" value="3"/>
</dbReference>
<dbReference type="InterPro" id="IPR027145">
    <property type="entry name" value="PWP2"/>
</dbReference>
<dbReference type="InterPro" id="IPR011047">
    <property type="entry name" value="Quinoprotein_ADH-like_sf"/>
</dbReference>
<dbReference type="InterPro" id="IPR007148">
    <property type="entry name" value="SSU_processome_Utp12"/>
</dbReference>
<dbReference type="InterPro" id="IPR015943">
    <property type="entry name" value="WD40/YVTN_repeat-like_dom_sf"/>
</dbReference>
<dbReference type="InterPro" id="IPR001680">
    <property type="entry name" value="WD40_rpt"/>
</dbReference>
<dbReference type="PANTHER" id="PTHR19858:SF0">
    <property type="entry name" value="PERIODIC TRYPTOPHAN PROTEIN 2 HOMOLOG"/>
    <property type="match status" value="1"/>
</dbReference>
<dbReference type="PANTHER" id="PTHR19858">
    <property type="entry name" value="WD40 REPEAT PROTEIN"/>
    <property type="match status" value="1"/>
</dbReference>
<dbReference type="Pfam" id="PF04003">
    <property type="entry name" value="Utp12"/>
    <property type="match status" value="1"/>
</dbReference>
<dbReference type="Pfam" id="PF00400">
    <property type="entry name" value="WD40"/>
    <property type="match status" value="3"/>
</dbReference>
<dbReference type="SMART" id="SM00320">
    <property type="entry name" value="WD40"/>
    <property type="match status" value="13"/>
</dbReference>
<dbReference type="SUPFAM" id="SSF50998">
    <property type="entry name" value="Quinoprotein alcohol dehydrogenase-like"/>
    <property type="match status" value="2"/>
</dbReference>
<dbReference type="PROSITE" id="PS00678">
    <property type="entry name" value="WD_REPEATS_1"/>
    <property type="match status" value="1"/>
</dbReference>
<dbReference type="PROSITE" id="PS50082">
    <property type="entry name" value="WD_REPEATS_2"/>
    <property type="match status" value="3"/>
</dbReference>
<dbReference type="PROSITE" id="PS50294">
    <property type="entry name" value="WD_REPEATS_REGION"/>
    <property type="match status" value="2"/>
</dbReference>
<feature type="chain" id="PRO_0000281771" description="Periodic tryptophan protein 2 homolog">
    <location>
        <begin position="1"/>
        <end position="918"/>
    </location>
</feature>
<feature type="repeat" description="WD 1">
    <location>
        <begin position="12"/>
        <end position="50"/>
    </location>
</feature>
<feature type="repeat" description="WD 2">
    <location>
        <begin position="53"/>
        <end position="93"/>
    </location>
</feature>
<feature type="repeat" description="WD 3">
    <location>
        <begin position="94"/>
        <end position="132"/>
    </location>
</feature>
<feature type="repeat" description="WD 4">
    <location>
        <begin position="142"/>
        <end position="181"/>
    </location>
</feature>
<feature type="repeat" description="WD 5">
    <location>
        <begin position="186"/>
        <end position="225"/>
    </location>
</feature>
<feature type="repeat" description="WD 6">
    <location>
        <begin position="283"/>
        <end position="322"/>
    </location>
</feature>
<feature type="repeat" description="WD 7">
    <location>
        <begin position="325"/>
        <end position="365"/>
    </location>
</feature>
<feature type="repeat" description="WD 8">
    <location>
        <begin position="368"/>
        <end position="407"/>
    </location>
</feature>
<feature type="repeat" description="WD 9">
    <location>
        <begin position="410"/>
        <end position="449"/>
    </location>
</feature>
<feature type="repeat" description="WD 10">
    <location>
        <begin position="453"/>
        <end position="495"/>
    </location>
</feature>
<feature type="repeat" description="WD 11">
    <location>
        <begin position="496"/>
        <end position="535"/>
    </location>
</feature>
<feature type="repeat" description="WD 12">
    <location>
        <begin position="538"/>
        <end position="577"/>
    </location>
</feature>
<feature type="repeat" description="WD 13">
    <location>
        <begin position="600"/>
        <end position="639"/>
    </location>
</feature>
<feature type="repeat" description="WD 14">
    <location>
        <begin position="697"/>
        <end position="737"/>
    </location>
</feature>
<feature type="region of interest" description="Disordered" evidence="3">
    <location>
        <begin position="237"/>
        <end position="262"/>
    </location>
</feature>
<feature type="region of interest" description="Disordered" evidence="3">
    <location>
        <begin position="878"/>
        <end position="918"/>
    </location>
</feature>
<feature type="compositionally biased region" description="Basic and acidic residues" evidence="3">
    <location>
        <begin position="250"/>
        <end position="262"/>
    </location>
</feature>
<feature type="compositionally biased region" description="Acidic residues" evidence="3">
    <location>
        <begin position="887"/>
        <end position="897"/>
    </location>
</feature>
<feature type="modified residue" description="Phosphoserine" evidence="2">
    <location>
        <position position="895"/>
    </location>
</feature>
<feature type="modified residue" description="Phosphoserine" evidence="2">
    <location>
        <position position="899"/>
    </location>
</feature>
<protein>
    <recommendedName>
        <fullName>Periodic tryptophan protein 2 homolog</fullName>
    </recommendedName>
</protein>